<protein>
    <recommendedName>
        <fullName evidence="1">Allantoinase</fullName>
        <ecNumber evidence="1">3.5.2.5</ecNumber>
    </recommendedName>
    <alternativeName>
        <fullName evidence="1">Allantoin-utilizing enzyme</fullName>
    </alternativeName>
</protein>
<organism>
    <name type="scientific">Desulfitobacterium hafniense (strain Y51)</name>
    <dbReference type="NCBI Taxonomy" id="138119"/>
    <lineage>
        <taxon>Bacteria</taxon>
        <taxon>Bacillati</taxon>
        <taxon>Bacillota</taxon>
        <taxon>Clostridia</taxon>
        <taxon>Eubacteriales</taxon>
        <taxon>Desulfitobacteriaceae</taxon>
        <taxon>Desulfitobacterium</taxon>
    </lineage>
</organism>
<name>ALLB_DESHY</name>
<proteinExistence type="inferred from homology"/>
<accession>Q24PT9</accession>
<gene>
    <name evidence="1" type="primary">allB</name>
    <name type="ordered locus">DSY4164</name>
</gene>
<feature type="chain" id="PRO_0000317673" description="Allantoinase">
    <location>
        <begin position="1"/>
        <end position="449"/>
    </location>
</feature>
<feature type="binding site" evidence="1">
    <location>
        <position position="61"/>
    </location>
    <ligand>
        <name>Zn(2+)</name>
        <dbReference type="ChEBI" id="CHEBI:29105"/>
        <label>1</label>
    </ligand>
</feature>
<feature type="binding site" evidence="1">
    <location>
        <position position="63"/>
    </location>
    <ligand>
        <name>Zn(2+)</name>
        <dbReference type="ChEBI" id="CHEBI:29105"/>
        <label>1</label>
    </ligand>
</feature>
<feature type="binding site" description="via carbamate group" evidence="1">
    <location>
        <position position="148"/>
    </location>
    <ligand>
        <name>Zn(2+)</name>
        <dbReference type="ChEBI" id="CHEBI:29105"/>
        <label>1</label>
    </ligand>
</feature>
<feature type="binding site" description="via carbamate group" evidence="1">
    <location>
        <position position="148"/>
    </location>
    <ligand>
        <name>Zn(2+)</name>
        <dbReference type="ChEBI" id="CHEBI:29105"/>
        <label>2</label>
    </ligand>
</feature>
<feature type="binding site" evidence="1">
    <location>
        <position position="184"/>
    </location>
    <ligand>
        <name>Zn(2+)</name>
        <dbReference type="ChEBI" id="CHEBI:29105"/>
        <label>2</label>
    </ligand>
</feature>
<feature type="binding site" evidence="1">
    <location>
        <position position="240"/>
    </location>
    <ligand>
        <name>Zn(2+)</name>
        <dbReference type="ChEBI" id="CHEBI:29105"/>
        <label>2</label>
    </ligand>
</feature>
<feature type="binding site" evidence="1">
    <location>
        <position position="313"/>
    </location>
    <ligand>
        <name>Zn(2+)</name>
        <dbReference type="ChEBI" id="CHEBI:29105"/>
        <label>1</label>
    </ligand>
</feature>
<feature type="modified residue" description="N6-carboxylysine" evidence="1">
    <location>
        <position position="148"/>
    </location>
</feature>
<keyword id="KW-0378">Hydrolase</keyword>
<keyword id="KW-0479">Metal-binding</keyword>
<keyword id="KW-0659">Purine metabolism</keyword>
<keyword id="KW-1185">Reference proteome</keyword>
<keyword id="KW-0862">Zinc</keyword>
<dbReference type="EC" id="3.5.2.5" evidence="1"/>
<dbReference type="EMBL" id="AP008230">
    <property type="protein sequence ID" value="BAE85953.1"/>
    <property type="molecule type" value="Genomic_DNA"/>
</dbReference>
<dbReference type="RefSeq" id="WP_011461639.1">
    <property type="nucleotide sequence ID" value="NC_007907.1"/>
</dbReference>
<dbReference type="SMR" id="Q24PT9"/>
<dbReference type="STRING" id="138119.DSY4164"/>
<dbReference type="KEGG" id="dsy:DSY4164"/>
<dbReference type="eggNOG" id="COG0044">
    <property type="taxonomic scope" value="Bacteria"/>
</dbReference>
<dbReference type="HOGENOM" id="CLU_015572_4_2_9"/>
<dbReference type="UniPathway" id="UPA00395">
    <property type="reaction ID" value="UER00653"/>
</dbReference>
<dbReference type="Proteomes" id="UP000001946">
    <property type="component" value="Chromosome"/>
</dbReference>
<dbReference type="GO" id="GO:0005737">
    <property type="term" value="C:cytoplasm"/>
    <property type="evidence" value="ECO:0007669"/>
    <property type="project" value="TreeGrafter"/>
</dbReference>
<dbReference type="GO" id="GO:0004038">
    <property type="term" value="F:allantoinase activity"/>
    <property type="evidence" value="ECO:0007669"/>
    <property type="project" value="UniProtKB-UniRule"/>
</dbReference>
<dbReference type="GO" id="GO:0050897">
    <property type="term" value="F:cobalt ion binding"/>
    <property type="evidence" value="ECO:0007669"/>
    <property type="project" value="InterPro"/>
</dbReference>
<dbReference type="GO" id="GO:0008270">
    <property type="term" value="F:zinc ion binding"/>
    <property type="evidence" value="ECO:0007669"/>
    <property type="project" value="InterPro"/>
</dbReference>
<dbReference type="GO" id="GO:0000256">
    <property type="term" value="P:allantoin catabolic process"/>
    <property type="evidence" value="ECO:0007669"/>
    <property type="project" value="UniProtKB-UniRule"/>
</dbReference>
<dbReference type="GO" id="GO:0006145">
    <property type="term" value="P:purine nucleobase catabolic process"/>
    <property type="evidence" value="ECO:0007669"/>
    <property type="project" value="TreeGrafter"/>
</dbReference>
<dbReference type="CDD" id="cd01315">
    <property type="entry name" value="L-HYD_ALN"/>
    <property type="match status" value="1"/>
</dbReference>
<dbReference type="Gene3D" id="3.20.20.140">
    <property type="entry name" value="Metal-dependent hydrolases"/>
    <property type="match status" value="1"/>
</dbReference>
<dbReference type="Gene3D" id="2.30.40.10">
    <property type="entry name" value="Urease, subunit C, domain 1"/>
    <property type="match status" value="1"/>
</dbReference>
<dbReference type="HAMAP" id="MF_01645">
    <property type="entry name" value="Hydantoinase"/>
    <property type="match status" value="1"/>
</dbReference>
<dbReference type="InterPro" id="IPR017593">
    <property type="entry name" value="Allantoinase"/>
</dbReference>
<dbReference type="InterPro" id="IPR047604">
    <property type="entry name" value="Allantoinase_bact"/>
</dbReference>
<dbReference type="InterPro" id="IPR006680">
    <property type="entry name" value="Amidohydro-rel"/>
</dbReference>
<dbReference type="InterPro" id="IPR050138">
    <property type="entry name" value="DHOase/Allantoinase_Hydrolase"/>
</dbReference>
<dbReference type="InterPro" id="IPR011059">
    <property type="entry name" value="Metal-dep_hydrolase_composite"/>
</dbReference>
<dbReference type="InterPro" id="IPR032466">
    <property type="entry name" value="Metal_Hydrolase"/>
</dbReference>
<dbReference type="NCBIfam" id="TIGR03178">
    <property type="entry name" value="allantoinase"/>
    <property type="match status" value="1"/>
</dbReference>
<dbReference type="PANTHER" id="PTHR43668">
    <property type="entry name" value="ALLANTOINASE"/>
    <property type="match status" value="1"/>
</dbReference>
<dbReference type="PANTHER" id="PTHR43668:SF4">
    <property type="entry name" value="ALLANTOINASE"/>
    <property type="match status" value="1"/>
</dbReference>
<dbReference type="Pfam" id="PF01979">
    <property type="entry name" value="Amidohydro_1"/>
    <property type="match status" value="1"/>
</dbReference>
<dbReference type="SUPFAM" id="SSF51338">
    <property type="entry name" value="Composite domain of metallo-dependent hydrolases"/>
    <property type="match status" value="1"/>
</dbReference>
<dbReference type="SUPFAM" id="SSF51556">
    <property type="entry name" value="Metallo-dependent hydrolases"/>
    <property type="match status" value="1"/>
</dbReference>
<comment type="function">
    <text evidence="1">Catalyzes the conversion of allantoin (5-ureidohydantoin) to allantoic acid by hydrolytic cleavage of the five-member hydantoin ring.</text>
</comment>
<comment type="catalytic activity">
    <reaction evidence="1">
        <text>(S)-allantoin + H2O = allantoate + H(+)</text>
        <dbReference type="Rhea" id="RHEA:17029"/>
        <dbReference type="ChEBI" id="CHEBI:15377"/>
        <dbReference type="ChEBI" id="CHEBI:15378"/>
        <dbReference type="ChEBI" id="CHEBI:15678"/>
        <dbReference type="ChEBI" id="CHEBI:17536"/>
        <dbReference type="EC" id="3.5.2.5"/>
    </reaction>
</comment>
<comment type="cofactor">
    <cofactor evidence="1">
        <name>Zn(2+)</name>
        <dbReference type="ChEBI" id="CHEBI:29105"/>
    </cofactor>
    <text evidence="1">Binds 2 Zn(2+) ions per subunit.</text>
</comment>
<comment type="pathway">
    <text evidence="1">Nitrogen metabolism; (S)-allantoin degradation; allantoate from (S)-allantoin: step 1/1.</text>
</comment>
<comment type="subunit">
    <text evidence="1">Homotetramer.</text>
</comment>
<comment type="PTM">
    <text evidence="1">Carboxylation allows a single lysine to coordinate two zinc ions.</text>
</comment>
<comment type="similarity">
    <text evidence="1">Belongs to the metallo-dependent hydrolases superfamily. Allantoinase family.</text>
</comment>
<sequence>MSHYDLILRNGNVVCPDGVRKADIAVSDGKIVLIAEEIPGDAKEVIDAAGKHVFPGITDGHVHFNDPGRTEWETISTGSSALAAGGGVAYFDMPLNCSPCTLDAVNFNNKLAVAQKDSLVDYGFWGGLTSANLDKLDELAECGVIGFKAFACHSGIDEFPRMDDYTALVGMEKLAKLGLPLMVHCENAEITKELTELSLANNRTGVRDYFAARPPITEIENVSRMITFAEETGCKLIIAHISTAKAVDLVAQARARGVDVYCETIGHYLYLTGDDVERLGTVAKCSPPIRDGENQLQMWGRLFNDNIAFVSSDHSPCDPKLKNGEFMRVWGGISACQTTLQGLLTHAYHDRKFPLVKIAQLTAQHVNEIFKIKGKGQINLGYDADFALVDLNHEFTLQAEDLFYKHKVSPYVGDRFRGSVSQTILRGTTIYKDGKIVSQPIGKHLRPHQ</sequence>
<reference key="1">
    <citation type="journal article" date="2006" name="J. Bacteriol.">
        <title>Complete genome sequence of the dehalorespiring bacterium Desulfitobacterium hafniense Y51 and comparison with Dehalococcoides ethenogenes 195.</title>
        <authorList>
            <person name="Nonaka H."/>
            <person name="Keresztes G."/>
            <person name="Shinoda Y."/>
            <person name="Ikenaga Y."/>
            <person name="Abe M."/>
            <person name="Naito K."/>
            <person name="Inatomi K."/>
            <person name="Furukawa K."/>
            <person name="Inui M."/>
            <person name="Yukawa H."/>
        </authorList>
    </citation>
    <scope>NUCLEOTIDE SEQUENCE [LARGE SCALE GENOMIC DNA]</scope>
    <source>
        <strain>Y51</strain>
    </source>
</reference>
<evidence type="ECO:0000255" key="1">
    <source>
        <dbReference type="HAMAP-Rule" id="MF_01645"/>
    </source>
</evidence>